<gene>
    <name type="primary">MT-CYB</name>
    <name type="synonym">COB</name>
    <name type="synonym">CYTB</name>
    <name type="synonym">MTCYB</name>
</gene>
<comment type="function">
    <text evidence="2">Component of the ubiquinol-cytochrome c reductase complex (complex III or cytochrome b-c1 complex) that is part of the mitochondrial respiratory chain. The b-c1 complex mediates electron transfer from ubiquinol to cytochrome c. Contributes to the generation of a proton gradient across the mitochondrial membrane that is then used for ATP synthesis.</text>
</comment>
<comment type="cofactor">
    <cofactor evidence="2">
        <name>heme b</name>
        <dbReference type="ChEBI" id="CHEBI:60344"/>
    </cofactor>
    <text evidence="2">Binds 2 heme b groups non-covalently.</text>
</comment>
<comment type="subunit">
    <text evidence="2">The cytochrome bc1 complex contains 11 subunits: 3 respiratory subunits (MT-CYB, CYC1 and UQCRFS1), 2 core proteins (UQCRC1 and UQCRC2) and 6 low-molecular weight proteins (UQCRH/QCR6, UQCRB/QCR7, UQCRQ/QCR8, UQCR10/QCR9, UQCR11/QCR10 and a cleavage product of UQCRFS1). This cytochrome bc1 complex then forms a dimer.</text>
</comment>
<comment type="subcellular location">
    <subcellularLocation>
        <location evidence="2">Mitochondrion inner membrane</location>
        <topology evidence="2">Multi-pass membrane protein</topology>
    </subcellularLocation>
</comment>
<comment type="miscellaneous">
    <text evidence="1">Heme 1 (or BL or b562) is low-potential and absorbs at about 562 nm, and heme 2 (or BH or b566) is high-potential and absorbs at about 566 nm.</text>
</comment>
<comment type="similarity">
    <text evidence="3 4">Belongs to the cytochrome b family.</text>
</comment>
<comment type="caution">
    <text evidence="2">The full-length protein contains only eight transmembrane helices, not nine as predicted by bioinformatics tools.</text>
</comment>
<protein>
    <recommendedName>
        <fullName>Cytochrome b</fullName>
    </recommendedName>
    <alternativeName>
        <fullName>Complex III subunit 3</fullName>
    </alternativeName>
    <alternativeName>
        <fullName>Complex III subunit III</fullName>
    </alternativeName>
    <alternativeName>
        <fullName>Cytochrome b-c1 complex subunit 3</fullName>
    </alternativeName>
    <alternativeName>
        <fullName>Ubiquinol-cytochrome-c reductase complex cytochrome b subunit</fullName>
    </alternativeName>
</protein>
<sequence length="379" mass="42785">MTIMRKTHPLMKMVNHAFIDLPTPSNISGWWNFGSLLGLCLVIQIVSGLFLAMHYTPDTLTAFSSVTHICRDVNYGWLIRYMHANGASLFFICLYLHIGRGIYYGSYSYMETWNVGIILLFLVMATAFMGYVLPWGQMSFWGATVITNLLSAIPYIGADLVEWIWGGFSVDKATLNRFFAFHFILPFIIAAMAMVHLLFLHETGSNNPLGIPSDCDKIPFHPYYTTKDFLGLVILLALFFTLVLFFPDLLGDPDNYSPANPLNTPPHIKPEWYFLFAYAILRSIPNKLGGVIALVLSILILALLPHIQTASQRSLMFRPISQFLFWLLVSDVLVLTWIGGQPVEPPFIIIGQIASLTYFTIILALMPIAGIIENKMLKW</sequence>
<organism>
    <name type="scientific">Dipodomys deserti</name>
    <name type="common">Desert kangaroo rat</name>
    <dbReference type="NCBI Taxonomy" id="284671"/>
    <lineage>
        <taxon>Eukaryota</taxon>
        <taxon>Metazoa</taxon>
        <taxon>Chordata</taxon>
        <taxon>Craniata</taxon>
        <taxon>Vertebrata</taxon>
        <taxon>Euteleostomi</taxon>
        <taxon>Mammalia</taxon>
        <taxon>Eutheria</taxon>
        <taxon>Euarchontoglires</taxon>
        <taxon>Glires</taxon>
        <taxon>Rodentia</taxon>
        <taxon>Castorimorpha</taxon>
        <taxon>Heteromyidae</taxon>
        <taxon>Dipodomyinae</taxon>
        <taxon>Dipodomys</taxon>
    </lineage>
</organism>
<reference key="1">
    <citation type="journal article" date="2005" name="J. Mammal.">
        <title>Phylogenetics of the new world rodent family Heteromyidae.</title>
        <authorList>
            <person name="Alexander L.F."/>
            <person name="Riddle B.R."/>
        </authorList>
    </citation>
    <scope>NUCLEOTIDE SEQUENCE [GENOMIC DNA]</scope>
    <source>
        <strain>Isolate LVT 2083</strain>
    </source>
</reference>
<proteinExistence type="inferred from homology"/>
<keyword id="KW-0249">Electron transport</keyword>
<keyword id="KW-0349">Heme</keyword>
<keyword id="KW-0408">Iron</keyword>
<keyword id="KW-0472">Membrane</keyword>
<keyword id="KW-0479">Metal-binding</keyword>
<keyword id="KW-0496">Mitochondrion</keyword>
<keyword id="KW-0999">Mitochondrion inner membrane</keyword>
<keyword id="KW-0679">Respiratory chain</keyword>
<keyword id="KW-0812">Transmembrane</keyword>
<keyword id="KW-1133">Transmembrane helix</keyword>
<keyword id="KW-0813">Transport</keyword>
<keyword id="KW-0830">Ubiquinone</keyword>
<accession>Q508M2</accession>
<evidence type="ECO:0000250" key="1"/>
<evidence type="ECO:0000250" key="2">
    <source>
        <dbReference type="UniProtKB" id="P00157"/>
    </source>
</evidence>
<evidence type="ECO:0000255" key="3">
    <source>
        <dbReference type="PROSITE-ProRule" id="PRU00967"/>
    </source>
</evidence>
<evidence type="ECO:0000255" key="4">
    <source>
        <dbReference type="PROSITE-ProRule" id="PRU00968"/>
    </source>
</evidence>
<feature type="chain" id="PRO_0000255037" description="Cytochrome b">
    <location>
        <begin position="1"/>
        <end position="379"/>
    </location>
</feature>
<feature type="transmembrane region" description="Helical" evidence="2">
    <location>
        <begin position="33"/>
        <end position="53"/>
    </location>
</feature>
<feature type="transmembrane region" description="Helical" evidence="2">
    <location>
        <begin position="77"/>
        <end position="98"/>
    </location>
</feature>
<feature type="transmembrane region" description="Helical" evidence="2">
    <location>
        <begin position="113"/>
        <end position="133"/>
    </location>
</feature>
<feature type="transmembrane region" description="Helical" evidence="2">
    <location>
        <begin position="178"/>
        <end position="198"/>
    </location>
</feature>
<feature type="transmembrane region" description="Helical" evidence="2">
    <location>
        <begin position="226"/>
        <end position="246"/>
    </location>
</feature>
<feature type="transmembrane region" description="Helical" evidence="2">
    <location>
        <begin position="288"/>
        <end position="308"/>
    </location>
</feature>
<feature type="transmembrane region" description="Helical" evidence="2">
    <location>
        <begin position="320"/>
        <end position="340"/>
    </location>
</feature>
<feature type="transmembrane region" description="Helical" evidence="2">
    <location>
        <begin position="347"/>
        <end position="367"/>
    </location>
</feature>
<feature type="binding site" description="axial binding residue" evidence="2">
    <location>
        <position position="83"/>
    </location>
    <ligand>
        <name>heme b</name>
        <dbReference type="ChEBI" id="CHEBI:60344"/>
        <label>b562</label>
    </ligand>
    <ligandPart>
        <name>Fe</name>
        <dbReference type="ChEBI" id="CHEBI:18248"/>
    </ligandPart>
</feature>
<feature type="binding site" description="axial binding residue" evidence="2">
    <location>
        <position position="97"/>
    </location>
    <ligand>
        <name>heme b</name>
        <dbReference type="ChEBI" id="CHEBI:60344"/>
        <label>b566</label>
    </ligand>
    <ligandPart>
        <name>Fe</name>
        <dbReference type="ChEBI" id="CHEBI:18248"/>
    </ligandPart>
</feature>
<feature type="binding site" description="axial binding residue" evidence="2">
    <location>
        <position position="182"/>
    </location>
    <ligand>
        <name>heme b</name>
        <dbReference type="ChEBI" id="CHEBI:60344"/>
        <label>b562</label>
    </ligand>
    <ligandPart>
        <name>Fe</name>
        <dbReference type="ChEBI" id="CHEBI:18248"/>
    </ligandPart>
</feature>
<feature type="binding site" description="axial binding residue" evidence="2">
    <location>
        <position position="196"/>
    </location>
    <ligand>
        <name>heme b</name>
        <dbReference type="ChEBI" id="CHEBI:60344"/>
        <label>b566</label>
    </ligand>
    <ligandPart>
        <name>Fe</name>
        <dbReference type="ChEBI" id="CHEBI:18248"/>
    </ligandPart>
</feature>
<feature type="binding site" evidence="2">
    <location>
        <position position="201"/>
    </location>
    <ligand>
        <name>a ubiquinone</name>
        <dbReference type="ChEBI" id="CHEBI:16389"/>
    </ligand>
</feature>
<geneLocation type="mitochondrion"/>
<name>CYB_DIPDS</name>
<dbReference type="EMBL" id="AY926381">
    <property type="protein sequence ID" value="AAY23224.1"/>
    <property type="molecule type" value="Genomic_DNA"/>
</dbReference>
<dbReference type="SMR" id="Q508M2"/>
<dbReference type="GO" id="GO:0005743">
    <property type="term" value="C:mitochondrial inner membrane"/>
    <property type="evidence" value="ECO:0007669"/>
    <property type="project" value="UniProtKB-SubCell"/>
</dbReference>
<dbReference type="GO" id="GO:0045275">
    <property type="term" value="C:respiratory chain complex III"/>
    <property type="evidence" value="ECO:0007669"/>
    <property type="project" value="InterPro"/>
</dbReference>
<dbReference type="GO" id="GO:0046872">
    <property type="term" value="F:metal ion binding"/>
    <property type="evidence" value="ECO:0007669"/>
    <property type="project" value="UniProtKB-KW"/>
</dbReference>
<dbReference type="GO" id="GO:0008121">
    <property type="term" value="F:ubiquinol-cytochrome-c reductase activity"/>
    <property type="evidence" value="ECO:0007669"/>
    <property type="project" value="InterPro"/>
</dbReference>
<dbReference type="GO" id="GO:0006122">
    <property type="term" value="P:mitochondrial electron transport, ubiquinol to cytochrome c"/>
    <property type="evidence" value="ECO:0007669"/>
    <property type="project" value="TreeGrafter"/>
</dbReference>
<dbReference type="CDD" id="cd00290">
    <property type="entry name" value="cytochrome_b_C"/>
    <property type="match status" value="1"/>
</dbReference>
<dbReference type="CDD" id="cd00284">
    <property type="entry name" value="Cytochrome_b_N"/>
    <property type="match status" value="1"/>
</dbReference>
<dbReference type="FunFam" id="1.20.810.10:FF:000002">
    <property type="entry name" value="Cytochrome b"/>
    <property type="match status" value="1"/>
</dbReference>
<dbReference type="Gene3D" id="1.20.810.10">
    <property type="entry name" value="Cytochrome Bc1 Complex, Chain C"/>
    <property type="match status" value="1"/>
</dbReference>
<dbReference type="InterPro" id="IPR005798">
    <property type="entry name" value="Cyt_b/b6_C"/>
</dbReference>
<dbReference type="InterPro" id="IPR036150">
    <property type="entry name" value="Cyt_b/b6_C_sf"/>
</dbReference>
<dbReference type="InterPro" id="IPR005797">
    <property type="entry name" value="Cyt_b/b6_N"/>
</dbReference>
<dbReference type="InterPro" id="IPR027387">
    <property type="entry name" value="Cytb/b6-like_sf"/>
</dbReference>
<dbReference type="InterPro" id="IPR030689">
    <property type="entry name" value="Cytochrome_b"/>
</dbReference>
<dbReference type="InterPro" id="IPR048260">
    <property type="entry name" value="Cytochrome_b_C_euk/bac"/>
</dbReference>
<dbReference type="InterPro" id="IPR048259">
    <property type="entry name" value="Cytochrome_b_N_euk/bac"/>
</dbReference>
<dbReference type="InterPro" id="IPR016174">
    <property type="entry name" value="Di-haem_cyt_TM"/>
</dbReference>
<dbReference type="PANTHER" id="PTHR19271">
    <property type="entry name" value="CYTOCHROME B"/>
    <property type="match status" value="1"/>
</dbReference>
<dbReference type="PANTHER" id="PTHR19271:SF16">
    <property type="entry name" value="CYTOCHROME B"/>
    <property type="match status" value="1"/>
</dbReference>
<dbReference type="Pfam" id="PF00032">
    <property type="entry name" value="Cytochrom_B_C"/>
    <property type="match status" value="1"/>
</dbReference>
<dbReference type="Pfam" id="PF00033">
    <property type="entry name" value="Cytochrome_B"/>
    <property type="match status" value="1"/>
</dbReference>
<dbReference type="PIRSF" id="PIRSF038885">
    <property type="entry name" value="COB"/>
    <property type="match status" value="1"/>
</dbReference>
<dbReference type="SUPFAM" id="SSF81648">
    <property type="entry name" value="a domain/subunit of cytochrome bc1 complex (Ubiquinol-cytochrome c reductase)"/>
    <property type="match status" value="1"/>
</dbReference>
<dbReference type="SUPFAM" id="SSF81342">
    <property type="entry name" value="Transmembrane di-heme cytochromes"/>
    <property type="match status" value="1"/>
</dbReference>
<dbReference type="PROSITE" id="PS51003">
    <property type="entry name" value="CYTB_CTER"/>
    <property type="match status" value="1"/>
</dbReference>
<dbReference type="PROSITE" id="PS51002">
    <property type="entry name" value="CYTB_NTER"/>
    <property type="match status" value="1"/>
</dbReference>